<keyword id="KW-0067">ATP-binding</keyword>
<keyword id="KW-0963">Cytoplasm</keyword>
<keyword id="KW-0235">DNA replication</keyword>
<keyword id="KW-0238">DNA-binding</keyword>
<keyword id="KW-0446">Lipid-binding</keyword>
<keyword id="KW-0547">Nucleotide-binding</keyword>
<sequence length="501" mass="56287">MSVELWQQCVELLRDELPAQQFNTWIRPLQVEAEGDELRVYAPNRFVLDWVNEKYLSRVLELLDEHGNGLAPVLSLLIGSKRSSAPRAAPNAPLAAAASQAQAAPVASTPAPAPSKSSAKKNAAENEEPSRDSFDPMAGASSQQAPIRAEQRTVQVEGALKHTSYLNRTFTFENFVEGKSNQLARAAAWQVADNPKHGYNPLFLYGGVGLGKTHLMHAVGNHLLKKNPNAKVVYLHSERFVADMVKALQLNAINEFKRFYRSVDALLIDDIQFFARKERSQEEFFHTFNALLEGGQQVILTSDRYPKEIEGLEERLKSRFGWGLTVAVEPPELETRVAILMKKADQAKVDLPHDAAFFIAQRIRSNVRELEGALKRVIAHSHFMGRDITIELIRESLKDLLALQDKLVSVDNIQRTVAEYYKIKISDLLSKRRSRSVARPRQVAMALSKELTNHSLPEIGDVFGGRDHTTVLHACRKINELKESDADIREDYKNLLRTLTT</sequence>
<proteinExistence type="inferred from homology"/>
<gene>
    <name evidence="1" type="primary">dnaA</name>
    <name type="ordered locus">PFLU_0001</name>
</gene>
<evidence type="ECO:0000255" key="1">
    <source>
        <dbReference type="HAMAP-Rule" id="MF_00377"/>
    </source>
</evidence>
<evidence type="ECO:0000256" key="2">
    <source>
        <dbReference type="SAM" id="MobiDB-lite"/>
    </source>
</evidence>
<name>DNAA_PSEFS</name>
<organism>
    <name type="scientific">Pseudomonas fluorescens (strain SBW25)</name>
    <dbReference type="NCBI Taxonomy" id="216595"/>
    <lineage>
        <taxon>Bacteria</taxon>
        <taxon>Pseudomonadati</taxon>
        <taxon>Pseudomonadota</taxon>
        <taxon>Gammaproteobacteria</taxon>
        <taxon>Pseudomonadales</taxon>
        <taxon>Pseudomonadaceae</taxon>
        <taxon>Pseudomonas</taxon>
    </lineage>
</organism>
<comment type="function">
    <text evidence="1">Plays an essential role in the initiation and regulation of chromosomal replication. ATP-DnaA binds to the origin of replication (oriC) to initiate formation of the DNA replication initiation complex once per cell cycle. Binds the DnaA box (a 9 base pair repeat at the origin) and separates the double-stranded (ds)DNA. Forms a right-handed helical filament on oriC DNA; dsDNA binds to the exterior of the filament while single-stranded (ss)DNA is stabiized in the filament's interior. The ATP-DnaA-oriC complex binds and stabilizes one strand of the AT-rich DNA unwinding element (DUE), permitting loading of DNA polymerase. After initiation quickly degrades to an ADP-DnaA complex that is not apt for DNA replication. Binds acidic phospholipids.</text>
</comment>
<comment type="subunit">
    <text evidence="1">Oligomerizes as a right-handed, spiral filament on DNA at oriC.</text>
</comment>
<comment type="subcellular location">
    <subcellularLocation>
        <location evidence="1">Cytoplasm</location>
    </subcellularLocation>
</comment>
<comment type="domain">
    <text evidence="1">Domain I is involved in oligomerization and binding regulators, domain II is flexibile and of varying length in different bacteria, domain III forms the AAA+ region, while domain IV binds dsDNA.</text>
</comment>
<comment type="similarity">
    <text evidence="1">Belongs to the DnaA family.</text>
</comment>
<dbReference type="EMBL" id="AM181176">
    <property type="protein sequence ID" value="CAJ57270.1"/>
    <property type="molecule type" value="Genomic_DNA"/>
</dbReference>
<dbReference type="RefSeq" id="WP_012721451.1">
    <property type="nucleotide sequence ID" value="NC_012660.1"/>
</dbReference>
<dbReference type="SMR" id="B0B0A5"/>
<dbReference type="STRING" id="294.SRM1_00056"/>
<dbReference type="GeneID" id="93461546"/>
<dbReference type="eggNOG" id="COG0593">
    <property type="taxonomic scope" value="Bacteria"/>
</dbReference>
<dbReference type="HOGENOM" id="CLU_026910_0_1_6"/>
<dbReference type="OrthoDB" id="9807019at2"/>
<dbReference type="GO" id="GO:0005737">
    <property type="term" value="C:cytoplasm"/>
    <property type="evidence" value="ECO:0007669"/>
    <property type="project" value="UniProtKB-SubCell"/>
</dbReference>
<dbReference type="GO" id="GO:0005886">
    <property type="term" value="C:plasma membrane"/>
    <property type="evidence" value="ECO:0007669"/>
    <property type="project" value="TreeGrafter"/>
</dbReference>
<dbReference type="GO" id="GO:0005524">
    <property type="term" value="F:ATP binding"/>
    <property type="evidence" value="ECO:0007669"/>
    <property type="project" value="UniProtKB-UniRule"/>
</dbReference>
<dbReference type="GO" id="GO:0016887">
    <property type="term" value="F:ATP hydrolysis activity"/>
    <property type="evidence" value="ECO:0007669"/>
    <property type="project" value="InterPro"/>
</dbReference>
<dbReference type="GO" id="GO:0003688">
    <property type="term" value="F:DNA replication origin binding"/>
    <property type="evidence" value="ECO:0007669"/>
    <property type="project" value="UniProtKB-UniRule"/>
</dbReference>
<dbReference type="GO" id="GO:0008289">
    <property type="term" value="F:lipid binding"/>
    <property type="evidence" value="ECO:0007669"/>
    <property type="project" value="UniProtKB-KW"/>
</dbReference>
<dbReference type="GO" id="GO:0006270">
    <property type="term" value="P:DNA replication initiation"/>
    <property type="evidence" value="ECO:0007669"/>
    <property type="project" value="UniProtKB-UniRule"/>
</dbReference>
<dbReference type="GO" id="GO:0006275">
    <property type="term" value="P:regulation of DNA replication"/>
    <property type="evidence" value="ECO:0007669"/>
    <property type="project" value="UniProtKB-UniRule"/>
</dbReference>
<dbReference type="CDD" id="cd00009">
    <property type="entry name" value="AAA"/>
    <property type="match status" value="1"/>
</dbReference>
<dbReference type="CDD" id="cd06571">
    <property type="entry name" value="Bac_DnaA_C"/>
    <property type="match status" value="1"/>
</dbReference>
<dbReference type="FunFam" id="1.10.1750.10:FF:000001">
    <property type="entry name" value="Chromosomal replication initiator protein DnaA"/>
    <property type="match status" value="1"/>
</dbReference>
<dbReference type="FunFam" id="1.10.8.60:FF:000003">
    <property type="entry name" value="Chromosomal replication initiator protein DnaA"/>
    <property type="match status" value="1"/>
</dbReference>
<dbReference type="FunFam" id="3.40.50.300:FF:000103">
    <property type="entry name" value="Chromosomal replication initiator protein DnaA"/>
    <property type="match status" value="1"/>
</dbReference>
<dbReference type="Gene3D" id="1.10.1750.10">
    <property type="match status" value="1"/>
</dbReference>
<dbReference type="Gene3D" id="1.10.8.60">
    <property type="match status" value="1"/>
</dbReference>
<dbReference type="Gene3D" id="3.30.300.180">
    <property type="match status" value="1"/>
</dbReference>
<dbReference type="Gene3D" id="3.40.50.300">
    <property type="entry name" value="P-loop containing nucleotide triphosphate hydrolases"/>
    <property type="match status" value="1"/>
</dbReference>
<dbReference type="HAMAP" id="MF_00377">
    <property type="entry name" value="DnaA_bact"/>
    <property type="match status" value="1"/>
</dbReference>
<dbReference type="InterPro" id="IPR003593">
    <property type="entry name" value="AAA+_ATPase"/>
</dbReference>
<dbReference type="InterPro" id="IPR001957">
    <property type="entry name" value="Chromosome_initiator_DnaA"/>
</dbReference>
<dbReference type="InterPro" id="IPR020591">
    <property type="entry name" value="Chromosome_initiator_DnaA-like"/>
</dbReference>
<dbReference type="InterPro" id="IPR018312">
    <property type="entry name" value="Chromosome_initiator_DnaA_CS"/>
</dbReference>
<dbReference type="InterPro" id="IPR013159">
    <property type="entry name" value="DnaA_C"/>
</dbReference>
<dbReference type="InterPro" id="IPR013317">
    <property type="entry name" value="DnaA_dom"/>
</dbReference>
<dbReference type="InterPro" id="IPR024633">
    <property type="entry name" value="DnaA_N_dom"/>
</dbReference>
<dbReference type="InterPro" id="IPR038454">
    <property type="entry name" value="DnaA_N_sf"/>
</dbReference>
<dbReference type="InterPro" id="IPR027417">
    <property type="entry name" value="P-loop_NTPase"/>
</dbReference>
<dbReference type="InterPro" id="IPR010921">
    <property type="entry name" value="Trp_repressor/repl_initiator"/>
</dbReference>
<dbReference type="NCBIfam" id="TIGR00362">
    <property type="entry name" value="DnaA"/>
    <property type="match status" value="1"/>
</dbReference>
<dbReference type="PANTHER" id="PTHR30050">
    <property type="entry name" value="CHROMOSOMAL REPLICATION INITIATOR PROTEIN DNAA"/>
    <property type="match status" value="1"/>
</dbReference>
<dbReference type="PANTHER" id="PTHR30050:SF2">
    <property type="entry name" value="CHROMOSOMAL REPLICATION INITIATOR PROTEIN DNAA"/>
    <property type="match status" value="1"/>
</dbReference>
<dbReference type="Pfam" id="PF00308">
    <property type="entry name" value="Bac_DnaA"/>
    <property type="match status" value="1"/>
</dbReference>
<dbReference type="Pfam" id="PF08299">
    <property type="entry name" value="Bac_DnaA_C"/>
    <property type="match status" value="1"/>
</dbReference>
<dbReference type="Pfam" id="PF11638">
    <property type="entry name" value="DnaA_N"/>
    <property type="match status" value="1"/>
</dbReference>
<dbReference type="PRINTS" id="PR00051">
    <property type="entry name" value="DNAA"/>
</dbReference>
<dbReference type="SMART" id="SM00382">
    <property type="entry name" value="AAA"/>
    <property type="match status" value="1"/>
</dbReference>
<dbReference type="SMART" id="SM00760">
    <property type="entry name" value="Bac_DnaA_C"/>
    <property type="match status" value="1"/>
</dbReference>
<dbReference type="SUPFAM" id="SSF52540">
    <property type="entry name" value="P-loop containing nucleoside triphosphate hydrolases"/>
    <property type="match status" value="1"/>
</dbReference>
<dbReference type="SUPFAM" id="SSF48295">
    <property type="entry name" value="TrpR-like"/>
    <property type="match status" value="1"/>
</dbReference>
<dbReference type="PROSITE" id="PS01008">
    <property type="entry name" value="DNAA"/>
    <property type="match status" value="1"/>
</dbReference>
<feature type="chain" id="PRO_1000205659" description="Chromosomal replication initiator protein DnaA">
    <location>
        <begin position="1"/>
        <end position="501"/>
    </location>
</feature>
<feature type="region of interest" description="Domain I, interacts with DnaA modulators" evidence="1">
    <location>
        <begin position="1"/>
        <end position="90"/>
    </location>
</feature>
<feature type="region of interest" description="Domain II" evidence="1">
    <location>
        <begin position="91"/>
        <end position="164"/>
    </location>
</feature>
<feature type="region of interest" description="Disordered" evidence="2">
    <location>
        <begin position="103"/>
        <end position="150"/>
    </location>
</feature>
<feature type="region of interest" description="Domain III, AAA+ region" evidence="1">
    <location>
        <begin position="165"/>
        <end position="381"/>
    </location>
</feature>
<feature type="region of interest" description="Domain IV, binds dsDNA" evidence="1">
    <location>
        <begin position="382"/>
        <end position="501"/>
    </location>
</feature>
<feature type="compositionally biased region" description="Low complexity" evidence="2">
    <location>
        <begin position="103"/>
        <end position="121"/>
    </location>
</feature>
<feature type="compositionally biased region" description="Basic and acidic residues" evidence="2">
    <location>
        <begin position="122"/>
        <end position="134"/>
    </location>
</feature>
<feature type="binding site" evidence="1">
    <location>
        <position position="209"/>
    </location>
    <ligand>
        <name>ATP</name>
        <dbReference type="ChEBI" id="CHEBI:30616"/>
    </ligand>
</feature>
<feature type="binding site" evidence="1">
    <location>
        <position position="211"/>
    </location>
    <ligand>
        <name>ATP</name>
        <dbReference type="ChEBI" id="CHEBI:30616"/>
    </ligand>
</feature>
<feature type="binding site" evidence="1">
    <location>
        <position position="212"/>
    </location>
    <ligand>
        <name>ATP</name>
        <dbReference type="ChEBI" id="CHEBI:30616"/>
    </ligand>
</feature>
<feature type="binding site" evidence="1">
    <location>
        <position position="213"/>
    </location>
    <ligand>
        <name>ATP</name>
        <dbReference type="ChEBI" id="CHEBI:30616"/>
    </ligand>
</feature>
<reference key="1">
    <citation type="journal article" date="2009" name="Genome Biol.">
        <title>Genomic and genetic analyses of diversity and plant interactions of Pseudomonas fluorescens.</title>
        <authorList>
            <person name="Silby M.W."/>
            <person name="Cerdeno-Tarraga A.M."/>
            <person name="Vernikos G.S."/>
            <person name="Giddens S.R."/>
            <person name="Jackson R.W."/>
            <person name="Preston G.M."/>
            <person name="Zhang X.-X."/>
            <person name="Moon C.D."/>
            <person name="Gehrig S.M."/>
            <person name="Godfrey S.A.C."/>
            <person name="Knight C.G."/>
            <person name="Malone J.G."/>
            <person name="Robinson Z."/>
            <person name="Spiers A.J."/>
            <person name="Harris S."/>
            <person name="Challis G.L."/>
            <person name="Yaxley A.M."/>
            <person name="Harris D."/>
            <person name="Seeger K."/>
            <person name="Murphy L."/>
            <person name="Rutter S."/>
            <person name="Squares R."/>
            <person name="Quail M.A."/>
            <person name="Saunders E."/>
            <person name="Mavromatis K."/>
            <person name="Brettin T.S."/>
            <person name="Bentley S.D."/>
            <person name="Hothersall J."/>
            <person name="Stephens E."/>
            <person name="Thomas C.M."/>
            <person name="Parkhill J."/>
            <person name="Levy S.B."/>
            <person name="Rainey P.B."/>
            <person name="Thomson N.R."/>
        </authorList>
    </citation>
    <scope>NUCLEOTIDE SEQUENCE [LARGE SCALE GENOMIC DNA]</scope>
    <source>
        <strain>SBW25</strain>
    </source>
</reference>
<accession>B0B0A5</accession>
<protein>
    <recommendedName>
        <fullName evidence="1">Chromosomal replication initiator protein DnaA</fullName>
    </recommendedName>
</protein>